<accession>P82656</accession>
<evidence type="ECO:0000269" key="1">
    <source>
    </source>
</evidence>
<evidence type="ECO:0000303" key="2">
    <source>
    </source>
</evidence>
<evidence type="ECO:0000303" key="3">
    <source>
    </source>
</evidence>
<evidence type="ECO:0000303" key="4">
    <source>
    </source>
</evidence>
<evidence type="ECO:0000305" key="5"/>
<protein>
    <recommendedName>
        <fullName evidence="2">Hadrurin</fullName>
    </recommendedName>
    <alternativeName>
        <fullName evidence="4">Non-disulfide-bridged peptide 2.1</fullName>
        <shortName evidence="4">NDBP-2.1</shortName>
    </alternativeName>
    <alternativeName>
        <fullName evidence="3">Non-disulfide-bridged peptide 3.1</fullName>
        <shortName evidence="3">NDBP-3.1</shortName>
    </alternativeName>
</protein>
<sequence length="41" mass="4436">GILDTIKSIASKVWNSKTVQDLKRKGINWVANKLGVSPQAA</sequence>
<organism>
    <name type="scientific">Hoffmannihadrurus aztecus</name>
    <name type="common">Mexican scorpion</name>
    <name type="synonym">Hadrurus aztecus</name>
    <dbReference type="NCBI Taxonomy" id="2171410"/>
    <lineage>
        <taxon>Eukaryota</taxon>
        <taxon>Metazoa</taxon>
        <taxon>Ecdysozoa</taxon>
        <taxon>Arthropoda</taxon>
        <taxon>Chelicerata</taxon>
        <taxon>Arachnida</taxon>
        <taxon>Scorpiones</taxon>
        <taxon>Iurida</taxon>
        <taxon>Iuroidea</taxon>
        <taxon>Hoffmannihadrurus</taxon>
    </lineage>
</organism>
<name>NDB21_HOFAZ</name>
<proteinExistence type="evidence at protein level"/>
<reference key="1">
    <citation type="journal article" date="2000" name="Eur. J. Biochem.">
        <title>Hadrurin, a new antimicrobial peptide from the venom of the scorpion Hadrurus aztecus.</title>
        <authorList>
            <person name="Torres-Larios A."/>
            <person name="Gurrola G.B."/>
            <person name="Zamudio F.Z."/>
            <person name="Possani L.D."/>
        </authorList>
    </citation>
    <scope>PROTEIN SEQUENCE</scope>
    <scope>SYNTHESIS</scope>
    <scope>SUBCELLULAR LOCATION</scope>
    <source>
        <tissue>Venom</tissue>
    </source>
</reference>
<reference key="2">
    <citation type="journal article" date="2005" name="IUBMB Life">
        <title>Scorpion venom peptides without disulfide bridges.</title>
        <authorList>
            <person name="Zeng X.C."/>
            <person name="Corzo G."/>
            <person name="Hahin R."/>
        </authorList>
    </citation>
    <scope>NOMENCLATURE</scope>
</reference>
<reference key="3">
    <citation type="journal article" date="2014" name="Peptides">
        <title>Scorpion venom peptides with no disulfide bridges: a review.</title>
        <authorList>
            <person name="Almaaytah A."/>
            <person name="Albalas Q."/>
        </authorList>
    </citation>
    <scope>NOMENCLATURE</scope>
</reference>
<keyword id="KW-0044">Antibiotic</keyword>
<keyword id="KW-0929">Antimicrobial</keyword>
<keyword id="KW-0204">Cytolysis</keyword>
<keyword id="KW-0903">Direct protein sequencing</keyword>
<keyword id="KW-0354">Hemolysis</keyword>
<keyword id="KW-0964">Secreted</keyword>
<comment type="function">
    <text>Antimicrobial activity against S.typhimurium, K.pneumoniae, E.cloacae, P.aeruginosa, E.coli and S.marcescens. Also shows hemolytic activity when tested in human erythrocytes.</text>
</comment>
<comment type="subcellular location">
    <subcellularLocation>
        <location evidence="1">Secreted</location>
    </subcellularLocation>
</comment>
<comment type="tissue specificity">
    <text evidence="5">Expressed by the venom gland.</text>
</comment>
<comment type="similarity">
    <text evidence="5">Belongs to the non-disulfide-bridged peptide (NDBP) superfamily. Long chain multifunctional peptide (group 2) family.</text>
</comment>
<dbReference type="SMR" id="P82656"/>
<dbReference type="GO" id="GO:0005576">
    <property type="term" value="C:extracellular region"/>
    <property type="evidence" value="ECO:0007669"/>
    <property type="project" value="UniProtKB-SubCell"/>
</dbReference>
<dbReference type="GO" id="GO:0042742">
    <property type="term" value="P:defense response to bacterium"/>
    <property type="evidence" value="ECO:0007669"/>
    <property type="project" value="UniProtKB-KW"/>
</dbReference>
<dbReference type="GO" id="GO:0044179">
    <property type="term" value="P:hemolysis in another organism"/>
    <property type="evidence" value="ECO:0007669"/>
    <property type="project" value="InterPro"/>
</dbReference>
<dbReference type="InterPro" id="IPR012526">
    <property type="entry name" value="Antimicrobial_7"/>
</dbReference>
<dbReference type="Pfam" id="PF08102">
    <property type="entry name" value="Antimicrobial_7"/>
    <property type="match status" value="1"/>
</dbReference>
<feature type="chain" id="PRO_0000152878" description="Hadrurin">
    <location>
        <begin position="1"/>
        <end position="41"/>
    </location>
</feature>